<gene>
    <name evidence="1" type="primary">ndhB2</name>
    <name type="ORF">PSC1442</name>
</gene>
<protein>
    <recommendedName>
        <fullName evidence="1">NAD(P)H-quinone oxidoreductase subunit 2 B, chloroplastic</fullName>
        <ecNumber evidence="1">7.1.1.-</ecNumber>
    </recommendedName>
    <alternativeName>
        <fullName evidence="1">NAD(P)H dehydrogenase, subunit 2 B</fullName>
    </alternativeName>
    <alternativeName>
        <fullName evidence="1">NADH-plastoquinone oxidoreductase subunit 2 B</fullName>
    </alternativeName>
</protein>
<organism>
    <name type="scientific">Panax ginseng</name>
    <name type="common">Korean ginseng</name>
    <dbReference type="NCBI Taxonomy" id="4054"/>
    <lineage>
        <taxon>Eukaryota</taxon>
        <taxon>Viridiplantae</taxon>
        <taxon>Streptophyta</taxon>
        <taxon>Embryophyta</taxon>
        <taxon>Tracheophyta</taxon>
        <taxon>Spermatophyta</taxon>
        <taxon>Magnoliopsida</taxon>
        <taxon>eudicotyledons</taxon>
        <taxon>Gunneridae</taxon>
        <taxon>Pentapetalae</taxon>
        <taxon>asterids</taxon>
        <taxon>campanulids</taxon>
        <taxon>Apiales</taxon>
        <taxon>Araliaceae</taxon>
        <taxon>Panax</taxon>
    </lineage>
</organism>
<geneLocation type="chloroplast"/>
<evidence type="ECO:0000255" key="1">
    <source>
        <dbReference type="HAMAP-Rule" id="MF_00445"/>
    </source>
</evidence>
<name>NU2C2_PANGI</name>
<reference key="1">
    <citation type="journal article" date="2004" name="DNA Res.">
        <title>Complete chloroplast genome sequence from Korea ginseng (Panax schinseng Nees) and comparative analysis of sequence evolution among 17 vascular plants.</title>
        <authorList>
            <person name="Kim K.-J."/>
            <person name="Lee H.-L."/>
        </authorList>
    </citation>
    <scope>NUCLEOTIDE SEQUENCE [LARGE SCALE GENOMIC DNA]</scope>
</reference>
<proteinExistence type="inferred from homology"/>
<accession>P0CD25</accession>
<accession>Q68RU6</accession>
<dbReference type="EC" id="7.1.1.-" evidence="1"/>
<dbReference type="EMBL" id="AY582139">
    <property type="protein sequence ID" value="AAT98571.1"/>
    <property type="molecule type" value="Genomic_DNA"/>
</dbReference>
<dbReference type="SMR" id="P0CD25"/>
<dbReference type="GO" id="GO:0009535">
    <property type="term" value="C:chloroplast thylakoid membrane"/>
    <property type="evidence" value="ECO:0007669"/>
    <property type="project" value="UniProtKB-SubCell"/>
</dbReference>
<dbReference type="GO" id="GO:0008137">
    <property type="term" value="F:NADH dehydrogenase (ubiquinone) activity"/>
    <property type="evidence" value="ECO:0007669"/>
    <property type="project" value="InterPro"/>
</dbReference>
<dbReference type="GO" id="GO:0048038">
    <property type="term" value="F:quinone binding"/>
    <property type="evidence" value="ECO:0007669"/>
    <property type="project" value="UniProtKB-KW"/>
</dbReference>
<dbReference type="GO" id="GO:0042773">
    <property type="term" value="P:ATP synthesis coupled electron transport"/>
    <property type="evidence" value="ECO:0007669"/>
    <property type="project" value="InterPro"/>
</dbReference>
<dbReference type="GO" id="GO:0019684">
    <property type="term" value="P:photosynthesis, light reaction"/>
    <property type="evidence" value="ECO:0007669"/>
    <property type="project" value="UniProtKB-UniRule"/>
</dbReference>
<dbReference type="HAMAP" id="MF_00445">
    <property type="entry name" value="NDH1_NuoN_1"/>
    <property type="match status" value="1"/>
</dbReference>
<dbReference type="InterPro" id="IPR010096">
    <property type="entry name" value="NADH-Q_OxRdtase_suN/2"/>
</dbReference>
<dbReference type="InterPro" id="IPR001750">
    <property type="entry name" value="ND/Mrp_TM"/>
</dbReference>
<dbReference type="InterPro" id="IPR045693">
    <property type="entry name" value="Ndh2_N"/>
</dbReference>
<dbReference type="NCBIfam" id="TIGR01770">
    <property type="entry name" value="NDH_I_N"/>
    <property type="match status" value="1"/>
</dbReference>
<dbReference type="NCBIfam" id="NF002701">
    <property type="entry name" value="PRK02504.1"/>
    <property type="match status" value="1"/>
</dbReference>
<dbReference type="PANTHER" id="PTHR22773">
    <property type="entry name" value="NADH DEHYDROGENASE"/>
    <property type="match status" value="1"/>
</dbReference>
<dbReference type="Pfam" id="PF19530">
    <property type="entry name" value="Ndh2_N"/>
    <property type="match status" value="1"/>
</dbReference>
<dbReference type="Pfam" id="PF00361">
    <property type="entry name" value="Proton_antipo_M"/>
    <property type="match status" value="1"/>
</dbReference>
<dbReference type="PRINTS" id="PR01434">
    <property type="entry name" value="NADHDHGNASE5"/>
</dbReference>
<feature type="chain" id="PRO_0000391300" description="NAD(P)H-quinone oxidoreductase subunit 2 B, chloroplastic">
    <location>
        <begin position="1"/>
        <end position="510"/>
    </location>
</feature>
<feature type="transmembrane region" description="Helical" evidence="1">
    <location>
        <begin position="24"/>
        <end position="44"/>
    </location>
</feature>
<feature type="transmembrane region" description="Helical" evidence="1">
    <location>
        <begin position="57"/>
        <end position="77"/>
    </location>
</feature>
<feature type="transmembrane region" description="Helical" evidence="1">
    <location>
        <begin position="99"/>
        <end position="119"/>
    </location>
</feature>
<feature type="transmembrane region" description="Helical" evidence="1">
    <location>
        <begin position="124"/>
        <end position="144"/>
    </location>
</feature>
<feature type="transmembrane region" description="Helical" evidence="1">
    <location>
        <begin position="149"/>
        <end position="169"/>
    </location>
</feature>
<feature type="transmembrane region" description="Helical" evidence="1">
    <location>
        <begin position="183"/>
        <end position="203"/>
    </location>
</feature>
<feature type="transmembrane region" description="Helical" evidence="1">
    <location>
        <begin position="227"/>
        <end position="247"/>
    </location>
</feature>
<feature type="transmembrane region" description="Helical" evidence="1">
    <location>
        <begin position="295"/>
        <end position="315"/>
    </location>
</feature>
<feature type="transmembrane region" description="Helical" evidence="1">
    <location>
        <begin position="323"/>
        <end position="343"/>
    </location>
</feature>
<feature type="transmembrane region" description="Helical" evidence="1">
    <location>
        <begin position="354"/>
        <end position="374"/>
    </location>
</feature>
<feature type="transmembrane region" description="Helical" evidence="1">
    <location>
        <begin position="395"/>
        <end position="415"/>
    </location>
</feature>
<feature type="transmembrane region" description="Helical" evidence="1">
    <location>
        <begin position="418"/>
        <end position="438"/>
    </location>
</feature>
<feature type="transmembrane region" description="Helical" evidence="1">
    <location>
        <begin position="484"/>
        <end position="504"/>
    </location>
</feature>
<keyword id="KW-0150">Chloroplast</keyword>
<keyword id="KW-0472">Membrane</keyword>
<keyword id="KW-0520">NAD</keyword>
<keyword id="KW-0521">NADP</keyword>
<keyword id="KW-0934">Plastid</keyword>
<keyword id="KW-0618">Plastoquinone</keyword>
<keyword id="KW-0874">Quinone</keyword>
<keyword id="KW-0793">Thylakoid</keyword>
<keyword id="KW-1278">Translocase</keyword>
<keyword id="KW-0812">Transmembrane</keyword>
<keyword id="KW-1133">Transmembrane helix</keyword>
<keyword id="KW-0813">Transport</keyword>
<comment type="function">
    <text evidence="1">NDH shuttles electrons from NAD(P)H:plastoquinone, via FMN and iron-sulfur (Fe-S) centers, to quinones in the photosynthetic chain and possibly in a chloroplast respiratory chain. The immediate electron acceptor for the enzyme in this species is believed to be plastoquinone. Couples the redox reaction to proton translocation, and thus conserves the redox energy in a proton gradient.</text>
</comment>
<comment type="catalytic activity">
    <reaction evidence="1">
        <text>a plastoquinone + NADH + (n+1) H(+)(in) = a plastoquinol + NAD(+) + n H(+)(out)</text>
        <dbReference type="Rhea" id="RHEA:42608"/>
        <dbReference type="Rhea" id="RHEA-COMP:9561"/>
        <dbReference type="Rhea" id="RHEA-COMP:9562"/>
        <dbReference type="ChEBI" id="CHEBI:15378"/>
        <dbReference type="ChEBI" id="CHEBI:17757"/>
        <dbReference type="ChEBI" id="CHEBI:57540"/>
        <dbReference type="ChEBI" id="CHEBI:57945"/>
        <dbReference type="ChEBI" id="CHEBI:62192"/>
    </reaction>
</comment>
<comment type="catalytic activity">
    <reaction evidence="1">
        <text>a plastoquinone + NADPH + (n+1) H(+)(in) = a plastoquinol + NADP(+) + n H(+)(out)</text>
        <dbReference type="Rhea" id="RHEA:42612"/>
        <dbReference type="Rhea" id="RHEA-COMP:9561"/>
        <dbReference type="Rhea" id="RHEA-COMP:9562"/>
        <dbReference type="ChEBI" id="CHEBI:15378"/>
        <dbReference type="ChEBI" id="CHEBI:17757"/>
        <dbReference type="ChEBI" id="CHEBI:57783"/>
        <dbReference type="ChEBI" id="CHEBI:58349"/>
        <dbReference type="ChEBI" id="CHEBI:62192"/>
    </reaction>
</comment>
<comment type="subunit">
    <text evidence="1">NDH is composed of at least 16 different subunits, 5 of which are encoded in the nucleus.</text>
</comment>
<comment type="subcellular location">
    <subcellularLocation>
        <location evidence="1">Plastid</location>
        <location evidence="1">Chloroplast thylakoid membrane</location>
        <topology evidence="1">Multi-pass membrane protein</topology>
    </subcellularLocation>
</comment>
<comment type="similarity">
    <text evidence="1">Belongs to the complex I subunit 2 family.</text>
</comment>
<sequence length="510" mass="56705">MIWHVQNENFILDSTRIFMKAFHLLLFDGSLIFPECILIFGLILLLMIDSTSDQKDIPWLYFISSTSLVMSITALLFRWREEPMISFSGNFQTNNFNEIFQFLILLCSTLCIPLSVEYIECTEMAITEFLLFVLTATLGGMFLCGANDLITIFVAPECFSLCSYLLSGYTKKDVRSNEATMKYLLMGGASSSILVHGFSWLYGSSGGEIELQEIVNGLINTQMYNSPGISIALIFITVGIGFKLSPAPSHQWTPDVYEGSPTPVVAFLSVTSKVAASASATRIFDIPFYFSSNEWHLLLEILAILSMILGNLIAITQTSMKRMLAYSSIGQIGYVIIGIIVGDSNDGYASMITYMLFYISMNLGTFACIVLFGLRTGTDNIRDYAGLYTKDPFLALSLALCLLSLGGLPPLAGFFGKLYLFWCGWQAGLYFLVLIGLLTSVVSIYYYLKIIKLLMIGRNQEITPHVRNYRRSPFRSNNSIELSMIVCVIASTIPGISMNPIIAIAQDTLF</sequence>